<gene>
    <name type="primary">ND3</name>
</gene>
<organism>
    <name type="scientific">Strongylocentrotus purpuratus</name>
    <name type="common">Purple sea urchin</name>
    <dbReference type="NCBI Taxonomy" id="7668"/>
    <lineage>
        <taxon>Eukaryota</taxon>
        <taxon>Metazoa</taxon>
        <taxon>Echinodermata</taxon>
        <taxon>Eleutherozoa</taxon>
        <taxon>Echinozoa</taxon>
        <taxon>Echinoidea</taxon>
        <taxon>Euechinoidea</taxon>
        <taxon>Echinacea</taxon>
        <taxon>Camarodonta</taxon>
        <taxon>Echinidea</taxon>
        <taxon>Strongylocentrotidae</taxon>
        <taxon>Strongylocentrotus</taxon>
    </lineage>
</organism>
<reference key="1">
    <citation type="journal article" date="1988" name="J. Mol. Biol.">
        <title>Nucleotide sequence and gene organization of sea urchin mitochondrial DNA.</title>
        <authorList>
            <person name="Jacobs H.T."/>
            <person name="Elliott D.J."/>
            <person name="Math V.B."/>
            <person name="Farquharson A."/>
        </authorList>
    </citation>
    <scope>NUCLEOTIDE SEQUENCE [GENOMIC DNA]</scope>
</reference>
<name>NU3M_STRPU</name>
<accession>P15550</accession>
<comment type="function">
    <text evidence="1">Core subunit of the mitochondrial membrane respiratory chain NADH dehydrogenase (Complex I) that is believed to belong to the minimal assembly required for catalysis. Complex I functions in the transfer of electrons from NADH to the respiratory chain. The immediate electron acceptor for the enzyme is believed to be ubiquinone (By similarity).</text>
</comment>
<comment type="catalytic activity">
    <reaction>
        <text>a ubiquinone + NADH + 5 H(+)(in) = a ubiquinol + NAD(+) + 4 H(+)(out)</text>
        <dbReference type="Rhea" id="RHEA:29091"/>
        <dbReference type="Rhea" id="RHEA-COMP:9565"/>
        <dbReference type="Rhea" id="RHEA-COMP:9566"/>
        <dbReference type="ChEBI" id="CHEBI:15378"/>
        <dbReference type="ChEBI" id="CHEBI:16389"/>
        <dbReference type="ChEBI" id="CHEBI:17976"/>
        <dbReference type="ChEBI" id="CHEBI:57540"/>
        <dbReference type="ChEBI" id="CHEBI:57945"/>
        <dbReference type="EC" id="7.1.1.2"/>
    </reaction>
</comment>
<comment type="subcellular location">
    <subcellularLocation>
        <location evidence="1">Mitochondrion membrane</location>
        <topology evidence="1">Multi-pass membrane protein</topology>
    </subcellularLocation>
</comment>
<comment type="similarity">
    <text evidence="3">Belongs to the complex I subunit 3 family.</text>
</comment>
<geneLocation type="mitochondrion"/>
<sequence>MTTIIFLFSITIAVAVVLGLAAHALPNRTSDSEKSSPYECGFDPLNSARLPFSFRFFLVAILFLLFDLEIALLFPLPAASLITPPSTLIPISMVFMVILTLGLVFEWINGGLEWAE</sequence>
<evidence type="ECO:0000250" key="1"/>
<evidence type="ECO:0000255" key="2"/>
<evidence type="ECO:0000305" key="3"/>
<dbReference type="EC" id="7.1.1.2"/>
<dbReference type="EMBL" id="X12631">
    <property type="protein sequence ID" value="CAA31158.1"/>
    <property type="molecule type" value="Genomic_DNA"/>
</dbReference>
<dbReference type="PIR" id="S01507">
    <property type="entry name" value="S01507"/>
</dbReference>
<dbReference type="RefSeq" id="NP_006973.1">
    <property type="nucleotide sequence ID" value="NC_001453.1"/>
</dbReference>
<dbReference type="SMR" id="P15550"/>
<dbReference type="FunCoup" id="P15550">
    <property type="interactions" value="40"/>
</dbReference>
<dbReference type="STRING" id="7668.P15550"/>
<dbReference type="EnsemblMetazoa" id="GeneID_2652723_df_mr">
    <property type="protein sequence ID" value="NP_006973"/>
    <property type="gene ID" value="GeneID_2652723"/>
</dbReference>
<dbReference type="GeneID" id="2652723"/>
<dbReference type="KEGG" id="spu:2652723"/>
<dbReference type="CTD" id="4537"/>
<dbReference type="InParanoid" id="P15550"/>
<dbReference type="OMA" id="GPRRYNR"/>
<dbReference type="OrthoDB" id="154075at2759"/>
<dbReference type="PhylomeDB" id="P15550"/>
<dbReference type="Proteomes" id="UP000007110">
    <property type="component" value="Unassembled WGS sequence"/>
</dbReference>
<dbReference type="GO" id="GO:0031966">
    <property type="term" value="C:mitochondrial membrane"/>
    <property type="evidence" value="ECO:0007669"/>
    <property type="project" value="UniProtKB-SubCell"/>
</dbReference>
<dbReference type="GO" id="GO:0045271">
    <property type="term" value="C:respiratory chain complex I"/>
    <property type="evidence" value="ECO:0000318"/>
    <property type="project" value="GO_Central"/>
</dbReference>
<dbReference type="GO" id="GO:0008137">
    <property type="term" value="F:NADH dehydrogenase (ubiquinone) activity"/>
    <property type="evidence" value="ECO:0000318"/>
    <property type="project" value="GO_Central"/>
</dbReference>
<dbReference type="FunFam" id="1.20.58.1610:FF:000004">
    <property type="entry name" value="NADH-quinone oxidoreductase subunit A"/>
    <property type="match status" value="1"/>
</dbReference>
<dbReference type="Gene3D" id="1.20.58.1610">
    <property type="entry name" value="NADH:ubiquinone/plastoquinone oxidoreductase, chain 3"/>
    <property type="match status" value="1"/>
</dbReference>
<dbReference type="InterPro" id="IPR000440">
    <property type="entry name" value="NADH_UbQ/plastoQ_OxRdtase_su3"/>
</dbReference>
<dbReference type="InterPro" id="IPR038430">
    <property type="entry name" value="NDAH_ubi_oxred_su3_sf"/>
</dbReference>
<dbReference type="PANTHER" id="PTHR11058">
    <property type="entry name" value="NADH-UBIQUINONE OXIDOREDUCTASE CHAIN 3"/>
    <property type="match status" value="1"/>
</dbReference>
<dbReference type="PANTHER" id="PTHR11058:SF9">
    <property type="entry name" value="NADH-UBIQUINONE OXIDOREDUCTASE CHAIN 3"/>
    <property type="match status" value="1"/>
</dbReference>
<dbReference type="Pfam" id="PF00507">
    <property type="entry name" value="Oxidored_q4"/>
    <property type="match status" value="1"/>
</dbReference>
<feature type="chain" id="PRO_0000117837" description="NADH-ubiquinone oxidoreductase chain 3">
    <location>
        <begin position="1"/>
        <end position="116"/>
    </location>
</feature>
<feature type="transmembrane region" description="Helical" evidence="2">
    <location>
        <begin position="4"/>
        <end position="24"/>
    </location>
</feature>
<feature type="transmembrane region" description="Helical" evidence="2">
    <location>
        <begin position="56"/>
        <end position="76"/>
    </location>
</feature>
<feature type="transmembrane region" description="Helical" evidence="2">
    <location>
        <begin position="88"/>
        <end position="108"/>
    </location>
</feature>
<protein>
    <recommendedName>
        <fullName>NADH-ubiquinone oxidoreductase chain 3</fullName>
        <ecNumber>7.1.1.2</ecNumber>
    </recommendedName>
    <alternativeName>
        <fullName>NADH dehydrogenase subunit 3</fullName>
    </alternativeName>
</protein>
<proteinExistence type="inferred from homology"/>
<keyword id="KW-0249">Electron transport</keyword>
<keyword id="KW-0472">Membrane</keyword>
<keyword id="KW-0496">Mitochondrion</keyword>
<keyword id="KW-0520">NAD</keyword>
<keyword id="KW-1185">Reference proteome</keyword>
<keyword id="KW-0679">Respiratory chain</keyword>
<keyword id="KW-1278">Translocase</keyword>
<keyword id="KW-0812">Transmembrane</keyword>
<keyword id="KW-1133">Transmembrane helix</keyword>
<keyword id="KW-0813">Transport</keyword>
<keyword id="KW-0830">Ubiquinone</keyword>